<organism>
    <name type="scientific">Escherichia coli O6:K15:H31 (strain 536 / UPEC)</name>
    <dbReference type="NCBI Taxonomy" id="362663"/>
    <lineage>
        <taxon>Bacteria</taxon>
        <taxon>Pseudomonadati</taxon>
        <taxon>Pseudomonadota</taxon>
        <taxon>Gammaproteobacteria</taxon>
        <taxon>Enterobacterales</taxon>
        <taxon>Enterobacteriaceae</taxon>
        <taxon>Escherichia</taxon>
    </lineage>
</organism>
<name>NANA_ECOL5</name>
<accession>Q0TCP1</accession>
<proteinExistence type="inferred from homology"/>
<gene>
    <name evidence="1" type="primary">nanA</name>
    <name type="ordered locus">ECP_3308</name>
</gene>
<comment type="function">
    <text evidence="1">Catalyzes the reversible aldol cleavage of N-acetylneuraminic acid (sialic acid; Neu5Ac) to form pyruvate and N-acetylmannosamine (ManNAc) via a Schiff base intermediate.</text>
</comment>
<comment type="catalytic activity">
    <reaction evidence="1">
        <text>aceneuramate = aldehydo-N-acetyl-D-mannosamine + pyruvate</text>
        <dbReference type="Rhea" id="RHEA:23296"/>
        <dbReference type="ChEBI" id="CHEBI:15361"/>
        <dbReference type="ChEBI" id="CHEBI:17122"/>
        <dbReference type="ChEBI" id="CHEBI:173083"/>
        <dbReference type="EC" id="4.1.3.3"/>
    </reaction>
</comment>
<comment type="pathway">
    <text evidence="1">Amino-sugar metabolism; N-acetylneuraminate degradation; D-fructose 6-phosphate from N-acetylneuraminate: step 1/5.</text>
</comment>
<comment type="subunit">
    <text evidence="1">Homotetramer.</text>
</comment>
<comment type="subcellular location">
    <subcellularLocation>
        <location evidence="1">Cytoplasm</location>
    </subcellularLocation>
</comment>
<comment type="similarity">
    <text evidence="1">Belongs to the DapA family. NanA subfamily.</text>
</comment>
<sequence length="297" mass="32593">MATNLRGVMAALLTPFDQQQALDKASLRRLVQFNIQQGIDGLYVGGSTGEAFVQSLSEREQVLEIVAEEAKGKIKLIAHVGCVSTAESQQLAASAKRYGFDAVSAVTPFYYPFSFEEHCDHYRAIIDSADGLPMVVYNIPALSGVKLTLDQINTLVTLPGVGALKQTSGDLYQMEQIRREHPDLVLYNGYDEIFASGLLAGADGGIGSTYNIMGWRYQGIVKALKEGDIQTAQKLQTECNKVIDLLIKTGVFRGLKTVLHYMDVVSVPLCRKPFGPVDEKYLPELKALAQQLMQERG</sequence>
<feature type="chain" id="PRO_1000066926" description="N-acetylneuraminate lyase">
    <location>
        <begin position="1"/>
        <end position="297"/>
    </location>
</feature>
<feature type="active site" description="Proton donor" evidence="1">
    <location>
        <position position="137"/>
    </location>
</feature>
<feature type="active site" description="Schiff-base intermediate with substrate" evidence="1">
    <location>
        <position position="165"/>
    </location>
</feature>
<feature type="binding site" evidence="1">
    <location>
        <position position="47"/>
    </location>
    <ligand>
        <name>aceneuramate</name>
        <dbReference type="ChEBI" id="CHEBI:173083"/>
    </ligand>
</feature>
<feature type="binding site" evidence="1">
    <location>
        <position position="48"/>
    </location>
    <ligand>
        <name>aceneuramate</name>
        <dbReference type="ChEBI" id="CHEBI:173083"/>
    </ligand>
</feature>
<feature type="binding site" evidence="1">
    <location>
        <position position="167"/>
    </location>
    <ligand>
        <name>aceneuramate</name>
        <dbReference type="ChEBI" id="CHEBI:173083"/>
    </ligand>
</feature>
<feature type="binding site" evidence="1">
    <location>
        <position position="189"/>
    </location>
    <ligand>
        <name>aceneuramate</name>
        <dbReference type="ChEBI" id="CHEBI:173083"/>
    </ligand>
</feature>
<feature type="binding site" evidence="1">
    <location>
        <position position="191"/>
    </location>
    <ligand>
        <name>aceneuramate</name>
        <dbReference type="ChEBI" id="CHEBI:173083"/>
    </ligand>
</feature>
<feature type="binding site" evidence="1">
    <location>
        <position position="192"/>
    </location>
    <ligand>
        <name>aceneuramate</name>
        <dbReference type="ChEBI" id="CHEBI:173083"/>
    </ligand>
</feature>
<feature type="binding site" evidence="1">
    <location>
        <position position="208"/>
    </location>
    <ligand>
        <name>aceneuramate</name>
        <dbReference type="ChEBI" id="CHEBI:173083"/>
    </ligand>
</feature>
<protein>
    <recommendedName>
        <fullName evidence="1">N-acetylneuraminate lyase</fullName>
        <shortName evidence="1">NAL</shortName>
        <shortName evidence="1">Neu5Ac lyase</shortName>
        <ecNumber evidence="1">4.1.3.3</ecNumber>
    </recommendedName>
    <alternativeName>
        <fullName evidence="1">N-acetylneuraminate pyruvate-lyase</fullName>
    </alternativeName>
    <alternativeName>
        <fullName evidence="1">N-acetylneuraminic acid aldolase</fullName>
    </alternativeName>
    <alternativeName>
        <fullName evidence="1">Sialate lyase</fullName>
    </alternativeName>
    <alternativeName>
        <fullName evidence="1">Sialic acid aldolase</fullName>
    </alternativeName>
    <alternativeName>
        <fullName evidence="1">Sialic acid lyase</fullName>
    </alternativeName>
</protein>
<keyword id="KW-0119">Carbohydrate metabolism</keyword>
<keyword id="KW-0963">Cytoplasm</keyword>
<keyword id="KW-0456">Lyase</keyword>
<keyword id="KW-0704">Schiff base</keyword>
<evidence type="ECO:0000255" key="1">
    <source>
        <dbReference type="HAMAP-Rule" id="MF_01237"/>
    </source>
</evidence>
<dbReference type="EC" id="4.1.3.3" evidence="1"/>
<dbReference type="EMBL" id="CP000247">
    <property type="protein sequence ID" value="ABG71288.1"/>
    <property type="molecule type" value="Genomic_DNA"/>
</dbReference>
<dbReference type="RefSeq" id="WP_000224714.1">
    <property type="nucleotide sequence ID" value="NC_008253.1"/>
</dbReference>
<dbReference type="SMR" id="Q0TCP1"/>
<dbReference type="GeneID" id="93778761"/>
<dbReference type="KEGG" id="ecp:ECP_3308"/>
<dbReference type="HOGENOM" id="CLU_049343_6_0_6"/>
<dbReference type="UniPathway" id="UPA00629">
    <property type="reaction ID" value="UER00680"/>
</dbReference>
<dbReference type="Proteomes" id="UP000009182">
    <property type="component" value="Chromosome"/>
</dbReference>
<dbReference type="GO" id="GO:0005829">
    <property type="term" value="C:cytosol"/>
    <property type="evidence" value="ECO:0007669"/>
    <property type="project" value="TreeGrafter"/>
</dbReference>
<dbReference type="GO" id="GO:0008747">
    <property type="term" value="F:N-acetylneuraminate lyase activity"/>
    <property type="evidence" value="ECO:0007669"/>
    <property type="project" value="UniProtKB-UniRule"/>
</dbReference>
<dbReference type="GO" id="GO:0005975">
    <property type="term" value="P:carbohydrate metabolic process"/>
    <property type="evidence" value="ECO:0007669"/>
    <property type="project" value="UniProtKB-UniRule"/>
</dbReference>
<dbReference type="GO" id="GO:0019262">
    <property type="term" value="P:N-acetylneuraminate catabolic process"/>
    <property type="evidence" value="ECO:0007669"/>
    <property type="project" value="UniProtKB-UniRule"/>
</dbReference>
<dbReference type="CDD" id="cd00954">
    <property type="entry name" value="NAL"/>
    <property type="match status" value="1"/>
</dbReference>
<dbReference type="FunFam" id="3.20.20.70:FF:000039">
    <property type="entry name" value="N-acetylneuraminate lyase"/>
    <property type="match status" value="1"/>
</dbReference>
<dbReference type="Gene3D" id="3.20.20.70">
    <property type="entry name" value="Aldolase class I"/>
    <property type="match status" value="1"/>
</dbReference>
<dbReference type="HAMAP" id="MF_01237">
    <property type="entry name" value="N_acetylneuram_lyase"/>
    <property type="match status" value="1"/>
</dbReference>
<dbReference type="InterPro" id="IPR013785">
    <property type="entry name" value="Aldolase_TIM"/>
</dbReference>
<dbReference type="InterPro" id="IPR002220">
    <property type="entry name" value="DapA-like"/>
</dbReference>
<dbReference type="InterPro" id="IPR005264">
    <property type="entry name" value="NanA"/>
</dbReference>
<dbReference type="InterPro" id="IPR020625">
    <property type="entry name" value="Schiff_base-form_aldolases_AS"/>
</dbReference>
<dbReference type="InterPro" id="IPR020624">
    <property type="entry name" value="Schiff_base-form_aldolases_CS"/>
</dbReference>
<dbReference type="NCBIfam" id="TIGR00683">
    <property type="entry name" value="nanA"/>
    <property type="match status" value="1"/>
</dbReference>
<dbReference type="NCBIfam" id="NF003164">
    <property type="entry name" value="PRK04147.1"/>
    <property type="match status" value="1"/>
</dbReference>
<dbReference type="PANTHER" id="PTHR42849">
    <property type="entry name" value="N-ACETYLNEURAMINATE LYASE"/>
    <property type="match status" value="1"/>
</dbReference>
<dbReference type="PANTHER" id="PTHR42849:SF1">
    <property type="entry name" value="N-ACETYLNEURAMINATE LYASE"/>
    <property type="match status" value="1"/>
</dbReference>
<dbReference type="Pfam" id="PF00701">
    <property type="entry name" value="DHDPS"/>
    <property type="match status" value="1"/>
</dbReference>
<dbReference type="PIRSF" id="PIRSF001365">
    <property type="entry name" value="DHDPS"/>
    <property type="match status" value="1"/>
</dbReference>
<dbReference type="PRINTS" id="PR00146">
    <property type="entry name" value="DHPICSNTHASE"/>
</dbReference>
<dbReference type="SMART" id="SM01130">
    <property type="entry name" value="DHDPS"/>
    <property type="match status" value="1"/>
</dbReference>
<dbReference type="SUPFAM" id="SSF51569">
    <property type="entry name" value="Aldolase"/>
    <property type="match status" value="1"/>
</dbReference>
<dbReference type="PROSITE" id="PS00665">
    <property type="entry name" value="DHDPS_1"/>
    <property type="match status" value="1"/>
</dbReference>
<dbReference type="PROSITE" id="PS00666">
    <property type="entry name" value="DHDPS_2"/>
    <property type="match status" value="1"/>
</dbReference>
<reference key="1">
    <citation type="journal article" date="2006" name="Mol. Microbiol.">
        <title>Role of pathogenicity island-associated integrases in the genome plasticity of uropathogenic Escherichia coli strain 536.</title>
        <authorList>
            <person name="Hochhut B."/>
            <person name="Wilde C."/>
            <person name="Balling G."/>
            <person name="Middendorf B."/>
            <person name="Dobrindt U."/>
            <person name="Brzuszkiewicz E."/>
            <person name="Gottschalk G."/>
            <person name="Carniel E."/>
            <person name="Hacker J."/>
        </authorList>
    </citation>
    <scope>NUCLEOTIDE SEQUENCE [LARGE SCALE GENOMIC DNA]</scope>
    <source>
        <strain>536 / UPEC</strain>
    </source>
</reference>